<name>CEMA_SACOF</name>
<feature type="chain" id="PRO_0000216661" description="Potassium/proton antiporter CemA">
    <location>
        <begin position="1"/>
        <end position="230"/>
    </location>
</feature>
<feature type="transmembrane region" description="Helical" evidence="1">
    <location>
        <begin position="7"/>
        <end position="27"/>
    </location>
</feature>
<feature type="transmembrane region" description="Helical" evidence="1">
    <location>
        <begin position="106"/>
        <end position="126"/>
    </location>
</feature>
<feature type="transmembrane region" description="Helical" evidence="1">
    <location>
        <begin position="145"/>
        <end position="165"/>
    </location>
</feature>
<feature type="transmembrane region" description="Helical" evidence="1">
    <location>
        <begin position="181"/>
        <end position="201"/>
    </location>
</feature>
<protein>
    <recommendedName>
        <fullName evidence="1">Potassium/proton antiporter CemA</fullName>
    </recommendedName>
    <alternativeName>
        <fullName evidence="1">Chloroplast envelope membrane protein A</fullName>
        <shortName evidence="1">CemA</shortName>
    </alternativeName>
</protein>
<sequence>MKKKKALPSFLYLVFIVLLPWGVSFSFNKCLELWIKNWWNTRQSETFLTDIQEKRILEGFIELEELFLLDEMIKEKPKTHVQKLPIGIHKEIIQLAKIDNEDHLHIILHFSTNIICLAILSGSFFLGKEELVILNSWVQEFFYNLNDSIKAFFILLVTDFFVGFHSTRGWELLIRWVYNNLGWAPNELIFTIFVCSFPVILDTCLKFWVFFCLNRLSPSLVVIYHSISEA</sequence>
<dbReference type="EMBL" id="AP006714">
    <property type="protein sequence ID" value="BAD27304.1"/>
    <property type="molecule type" value="Genomic_DNA"/>
</dbReference>
<dbReference type="RefSeq" id="YP_009389582.1">
    <property type="nucleotide sequence ID" value="NC_035224.1"/>
</dbReference>
<dbReference type="SMR" id="Q6ENV2"/>
<dbReference type="GeneID" id="33347910"/>
<dbReference type="GO" id="GO:0009706">
    <property type="term" value="C:chloroplast inner membrane"/>
    <property type="evidence" value="ECO:0007669"/>
    <property type="project" value="UniProtKB-SubCell"/>
</dbReference>
<dbReference type="GO" id="GO:0015297">
    <property type="term" value="F:antiporter activity"/>
    <property type="evidence" value="ECO:0007669"/>
    <property type="project" value="UniProtKB-KW"/>
</dbReference>
<dbReference type="GO" id="GO:0015078">
    <property type="term" value="F:proton transmembrane transporter activity"/>
    <property type="evidence" value="ECO:0007669"/>
    <property type="project" value="UniProtKB-UniRule"/>
</dbReference>
<dbReference type="GO" id="GO:0006813">
    <property type="term" value="P:potassium ion transport"/>
    <property type="evidence" value="ECO:0007669"/>
    <property type="project" value="UniProtKB-UniRule"/>
</dbReference>
<dbReference type="HAMAP" id="MF_01308">
    <property type="entry name" value="CemA_PxcA"/>
    <property type="match status" value="1"/>
</dbReference>
<dbReference type="InterPro" id="IPR004282">
    <property type="entry name" value="CemA"/>
</dbReference>
<dbReference type="PANTHER" id="PTHR33650:SF2">
    <property type="entry name" value="CHLOROPLAST ENVELOPE MEMBRANE PROTEIN"/>
    <property type="match status" value="1"/>
</dbReference>
<dbReference type="PANTHER" id="PTHR33650">
    <property type="entry name" value="CHLOROPLAST ENVELOPE MEMBRANE PROTEIN-RELATED"/>
    <property type="match status" value="1"/>
</dbReference>
<dbReference type="Pfam" id="PF03040">
    <property type="entry name" value="CemA"/>
    <property type="match status" value="1"/>
</dbReference>
<evidence type="ECO:0000255" key="1">
    <source>
        <dbReference type="HAMAP-Rule" id="MF_01308"/>
    </source>
</evidence>
<evidence type="ECO:0000305" key="2"/>
<keyword id="KW-0050">Antiport</keyword>
<keyword id="KW-0150">Chloroplast</keyword>
<keyword id="KW-0375">Hydrogen ion transport</keyword>
<keyword id="KW-0406">Ion transport</keyword>
<keyword id="KW-0472">Membrane</keyword>
<keyword id="KW-0934">Plastid</keyword>
<keyword id="KW-1001">Plastid inner membrane</keyword>
<keyword id="KW-0630">Potassium</keyword>
<keyword id="KW-0633">Potassium transport</keyword>
<keyword id="KW-0812">Transmembrane</keyword>
<keyword id="KW-1133">Transmembrane helix</keyword>
<keyword id="KW-0813">Transport</keyword>
<proteinExistence type="inferred from homology"/>
<organism>
    <name type="scientific">Saccharum officinarum</name>
    <name type="common">Sugarcane</name>
    <dbReference type="NCBI Taxonomy" id="4547"/>
    <lineage>
        <taxon>Eukaryota</taxon>
        <taxon>Viridiplantae</taxon>
        <taxon>Streptophyta</taxon>
        <taxon>Embryophyta</taxon>
        <taxon>Tracheophyta</taxon>
        <taxon>Spermatophyta</taxon>
        <taxon>Magnoliopsida</taxon>
        <taxon>Liliopsida</taxon>
        <taxon>Poales</taxon>
        <taxon>Poaceae</taxon>
        <taxon>PACMAD clade</taxon>
        <taxon>Panicoideae</taxon>
        <taxon>Andropogonodae</taxon>
        <taxon>Andropogoneae</taxon>
        <taxon>Saccharinae</taxon>
        <taxon>Saccharum</taxon>
        <taxon>Saccharum officinarum species complex</taxon>
    </lineage>
</organism>
<reference key="1">
    <citation type="journal article" date="2004" name="DNA Res.">
        <title>Complete nucleotide sequence of the sugarcane (Saccharum officinarum) chloroplast genome: a comparative analysis of four monocot chloroplast genomes.</title>
        <authorList>
            <person name="Asano T."/>
            <person name="Tsudzuki T."/>
            <person name="Takahashi S."/>
            <person name="Shimada H."/>
            <person name="Kadowaki K."/>
        </authorList>
    </citation>
    <scope>NUCLEOTIDE SEQUENCE [LARGE SCALE GENOMIC DNA]</scope>
</reference>
<gene>
    <name evidence="1" type="primary">cemA</name>
</gene>
<accession>Q6ENV2</accession>
<comment type="function">
    <text evidence="1">Contributes to K(+)/H(+) antiport activity by supporting proton efflux to control proton extrusion and homeostasis in chloroplasts in a light-dependent manner to modulate photosynthesis. Prevents excessive induction of non-photochemical quenching (NPQ) under continuous-light conditions. Indirectly promotes efficient inorganic carbon uptake into chloroplasts.</text>
</comment>
<comment type="catalytic activity">
    <reaction evidence="1">
        <text>K(+)(in) + H(+)(out) = K(+)(out) + H(+)(in)</text>
        <dbReference type="Rhea" id="RHEA:29467"/>
        <dbReference type="ChEBI" id="CHEBI:15378"/>
        <dbReference type="ChEBI" id="CHEBI:29103"/>
    </reaction>
</comment>
<comment type="subcellular location">
    <subcellularLocation>
        <location evidence="1">Plastid</location>
        <location evidence="1">Chloroplast inner membrane</location>
        <topology evidence="1">Multi-pass membrane protein</topology>
    </subcellularLocation>
</comment>
<comment type="similarity">
    <text evidence="1 2">Belongs to the CemA family.</text>
</comment>
<geneLocation type="chloroplast"/>